<evidence type="ECO:0000255" key="1"/>
<reference key="1">
    <citation type="journal article" date="2004" name="Science">
        <title>The 1.2-megabase genome sequence of Mimivirus.</title>
        <authorList>
            <person name="Raoult D."/>
            <person name="Audic S."/>
            <person name="Robert C."/>
            <person name="Abergel C."/>
            <person name="Renesto P."/>
            <person name="Ogata H."/>
            <person name="La Scola B."/>
            <person name="Susan M."/>
            <person name="Claverie J.-M."/>
        </authorList>
    </citation>
    <scope>NUCLEOTIDE SEQUENCE [LARGE SCALE GENOMIC DNA]</scope>
    <source>
        <strain>Rowbotham-Bradford</strain>
    </source>
</reference>
<feature type="chain" id="PRO_0000253290" description="Uncharacterized protein L649">
    <location>
        <begin position="1"/>
        <end position="281"/>
    </location>
</feature>
<feature type="coiled-coil region" evidence="1">
    <location>
        <begin position="242"/>
        <end position="281"/>
    </location>
</feature>
<name>YL649_MIMIV</name>
<organismHost>
    <name type="scientific">Acanthamoeba polyphaga</name>
    <name type="common">Amoeba</name>
    <dbReference type="NCBI Taxonomy" id="5757"/>
</organismHost>
<dbReference type="EMBL" id="AY653733">
    <property type="protein sequence ID" value="AAV50910.1"/>
    <property type="molecule type" value="Genomic_DNA"/>
</dbReference>
<dbReference type="KEGG" id="vg:9925293"/>
<dbReference type="Proteomes" id="UP000001134">
    <property type="component" value="Genome"/>
</dbReference>
<organism>
    <name type="scientific">Acanthamoeba polyphaga mimivirus</name>
    <name type="common">APMV</name>
    <dbReference type="NCBI Taxonomy" id="212035"/>
    <lineage>
        <taxon>Viruses</taxon>
        <taxon>Varidnaviria</taxon>
        <taxon>Bamfordvirae</taxon>
        <taxon>Nucleocytoviricota</taxon>
        <taxon>Megaviricetes</taxon>
        <taxon>Imitervirales</taxon>
        <taxon>Mimiviridae</taxon>
        <taxon>Megamimivirinae</taxon>
        <taxon>Mimivirus</taxon>
        <taxon>Mimivirus bradfordmassiliense</taxon>
    </lineage>
</organism>
<keyword id="KW-0175">Coiled coil</keyword>
<keyword id="KW-1185">Reference proteome</keyword>
<proteinExistence type="predicted"/>
<sequence>MSIKQEVFLSSGEGGIIQNNYNHSNNYNIYEHNIINEPNISVVVGRTGGGMTTVVQNIVDKIVTINNGDIEVIILTSNPKIYPNVDQCYSLSDIDLAHNYIISNPQNKKILVIDDFFKGVLRDKHTELIINHACLNLHIVLFVQCFVNFTPLIKNNLTYLFINNSVASSDIKSMYDRYLAPKINYRTFEKIMTRLETNRELSLVIVNNGLSDKLRIFESNFTLNPIYKYRCPNLQKQNKEPIDKQSRKKNIIREINDIKSKINDLSNYMDNLISELDDLFD</sequence>
<accession>Q5UR08</accession>
<protein>
    <recommendedName>
        <fullName>Uncharacterized protein L649</fullName>
    </recommendedName>
</protein>
<gene>
    <name type="ordered locus">MIMI_L649</name>
</gene>